<sequence>MAEITAKLVKELRDKTSAGMMDCKKALIENKGDMDKSIEWLRQKGIASAEKKSGRVAAEGAVGSYIHTGSRVGVLLELNCETDFVARGDLFQGLLRDLSMQVAACPSVEYVSVDQIPESIANKEKEIEMGRDDLSGKPDQIKAKIVEGRIGKRLKEMALLEQPFIKDSSINVEELVKQVAGKIGENIRVRRFTRYILGEGIEVQGPDFAEEVASMTSG</sequence>
<evidence type="ECO:0000255" key="1">
    <source>
        <dbReference type="HAMAP-Rule" id="MF_00050"/>
    </source>
</evidence>
<proteinExistence type="inferred from homology"/>
<name>EFTS_PROMT</name>
<dbReference type="EMBL" id="CP000095">
    <property type="protein sequence ID" value="AAZ57650.1"/>
    <property type="molecule type" value="Genomic_DNA"/>
</dbReference>
<dbReference type="RefSeq" id="WP_011293692.1">
    <property type="nucleotide sequence ID" value="NC_007335.2"/>
</dbReference>
<dbReference type="SMR" id="Q46LH8"/>
<dbReference type="STRING" id="59920.PMN2A_0158"/>
<dbReference type="KEGG" id="pmn:PMN2A_0158"/>
<dbReference type="HOGENOM" id="CLU_047155_1_1_3"/>
<dbReference type="OrthoDB" id="9808348at2"/>
<dbReference type="PhylomeDB" id="Q46LH8"/>
<dbReference type="Proteomes" id="UP000002535">
    <property type="component" value="Chromosome"/>
</dbReference>
<dbReference type="GO" id="GO:0005737">
    <property type="term" value="C:cytoplasm"/>
    <property type="evidence" value="ECO:0007669"/>
    <property type="project" value="UniProtKB-SubCell"/>
</dbReference>
<dbReference type="GO" id="GO:0003746">
    <property type="term" value="F:translation elongation factor activity"/>
    <property type="evidence" value="ECO:0007669"/>
    <property type="project" value="UniProtKB-UniRule"/>
</dbReference>
<dbReference type="CDD" id="cd14275">
    <property type="entry name" value="UBA_EF-Ts"/>
    <property type="match status" value="1"/>
</dbReference>
<dbReference type="FunFam" id="1.10.286.20:FF:000001">
    <property type="entry name" value="Elongation factor Ts"/>
    <property type="match status" value="1"/>
</dbReference>
<dbReference type="FunFam" id="1.10.8.10:FF:000001">
    <property type="entry name" value="Elongation factor Ts"/>
    <property type="match status" value="1"/>
</dbReference>
<dbReference type="Gene3D" id="1.10.286.20">
    <property type="match status" value="1"/>
</dbReference>
<dbReference type="Gene3D" id="1.10.8.10">
    <property type="entry name" value="DNA helicase RuvA subunit, C-terminal domain"/>
    <property type="match status" value="1"/>
</dbReference>
<dbReference type="Gene3D" id="3.30.479.20">
    <property type="entry name" value="Elongation factor Ts, dimerisation domain"/>
    <property type="match status" value="1"/>
</dbReference>
<dbReference type="HAMAP" id="MF_00050">
    <property type="entry name" value="EF_Ts"/>
    <property type="match status" value="1"/>
</dbReference>
<dbReference type="InterPro" id="IPR036402">
    <property type="entry name" value="EF-Ts_dimer_sf"/>
</dbReference>
<dbReference type="InterPro" id="IPR001816">
    <property type="entry name" value="Transl_elong_EFTs/EF1B"/>
</dbReference>
<dbReference type="InterPro" id="IPR014039">
    <property type="entry name" value="Transl_elong_EFTs/EF1B_dimer"/>
</dbReference>
<dbReference type="InterPro" id="IPR018101">
    <property type="entry name" value="Transl_elong_Ts_CS"/>
</dbReference>
<dbReference type="InterPro" id="IPR009060">
    <property type="entry name" value="UBA-like_sf"/>
</dbReference>
<dbReference type="NCBIfam" id="TIGR00116">
    <property type="entry name" value="tsf"/>
    <property type="match status" value="1"/>
</dbReference>
<dbReference type="PANTHER" id="PTHR11741">
    <property type="entry name" value="ELONGATION FACTOR TS"/>
    <property type="match status" value="1"/>
</dbReference>
<dbReference type="PANTHER" id="PTHR11741:SF10">
    <property type="entry name" value="POLYPROTEIN OF EF-TS, CHLOROPLASTIC"/>
    <property type="match status" value="1"/>
</dbReference>
<dbReference type="Pfam" id="PF00889">
    <property type="entry name" value="EF_TS"/>
    <property type="match status" value="1"/>
</dbReference>
<dbReference type="SUPFAM" id="SSF54713">
    <property type="entry name" value="Elongation factor Ts (EF-Ts), dimerisation domain"/>
    <property type="match status" value="1"/>
</dbReference>
<dbReference type="SUPFAM" id="SSF46934">
    <property type="entry name" value="UBA-like"/>
    <property type="match status" value="1"/>
</dbReference>
<dbReference type="PROSITE" id="PS01126">
    <property type="entry name" value="EF_TS_1"/>
    <property type="match status" value="1"/>
</dbReference>
<dbReference type="PROSITE" id="PS01127">
    <property type="entry name" value="EF_TS_2"/>
    <property type="match status" value="1"/>
</dbReference>
<comment type="function">
    <text evidence="1">Associates with the EF-Tu.GDP complex and induces the exchange of GDP to GTP. It remains bound to the aminoacyl-tRNA.EF-Tu.GTP complex up to the GTP hydrolysis stage on the ribosome.</text>
</comment>
<comment type="subcellular location">
    <subcellularLocation>
        <location evidence="1">Cytoplasm</location>
    </subcellularLocation>
</comment>
<comment type="similarity">
    <text evidence="1">Belongs to the EF-Ts family.</text>
</comment>
<protein>
    <recommendedName>
        <fullName evidence="1">Elongation factor Ts</fullName>
        <shortName evidence="1">EF-Ts</shortName>
    </recommendedName>
</protein>
<keyword id="KW-0963">Cytoplasm</keyword>
<keyword id="KW-0251">Elongation factor</keyword>
<keyword id="KW-0648">Protein biosynthesis</keyword>
<keyword id="KW-1185">Reference proteome</keyword>
<organism>
    <name type="scientific">Prochlorococcus marinus (strain NATL2A)</name>
    <dbReference type="NCBI Taxonomy" id="59920"/>
    <lineage>
        <taxon>Bacteria</taxon>
        <taxon>Bacillati</taxon>
        <taxon>Cyanobacteriota</taxon>
        <taxon>Cyanophyceae</taxon>
        <taxon>Synechococcales</taxon>
        <taxon>Prochlorococcaceae</taxon>
        <taxon>Prochlorococcus</taxon>
    </lineage>
</organism>
<reference key="1">
    <citation type="journal article" date="2007" name="PLoS Genet.">
        <title>Patterns and implications of gene gain and loss in the evolution of Prochlorococcus.</title>
        <authorList>
            <person name="Kettler G.C."/>
            <person name="Martiny A.C."/>
            <person name="Huang K."/>
            <person name="Zucker J."/>
            <person name="Coleman M.L."/>
            <person name="Rodrigue S."/>
            <person name="Chen F."/>
            <person name="Lapidus A."/>
            <person name="Ferriera S."/>
            <person name="Johnson J."/>
            <person name="Steglich C."/>
            <person name="Church G.M."/>
            <person name="Richardson P."/>
            <person name="Chisholm S.W."/>
        </authorList>
    </citation>
    <scope>NUCLEOTIDE SEQUENCE [LARGE SCALE GENOMIC DNA]</scope>
    <source>
        <strain>NATL2A</strain>
    </source>
</reference>
<feature type="chain" id="PRO_0000241507" description="Elongation factor Ts">
    <location>
        <begin position="1"/>
        <end position="218"/>
    </location>
</feature>
<feature type="region of interest" description="Involved in Mg(2+) ion dislocation from EF-Tu" evidence="1">
    <location>
        <begin position="82"/>
        <end position="85"/>
    </location>
</feature>
<accession>Q46LH8</accession>
<gene>
    <name evidence="1" type="primary">tsf</name>
    <name type="ordered locus">PMN2A_0158</name>
</gene>